<evidence type="ECO:0000250" key="1">
    <source>
        <dbReference type="UniProtKB" id="Q84U09"/>
    </source>
</evidence>
<evidence type="ECO:0000250" key="2">
    <source>
        <dbReference type="UniProtKB" id="Q9LVB9"/>
    </source>
</evidence>
<evidence type="ECO:0000255" key="3"/>
<evidence type="ECO:0000256" key="4">
    <source>
        <dbReference type="SAM" id="MobiDB-lite"/>
    </source>
</evidence>
<evidence type="ECO:0000269" key="5">
    <source>
    </source>
</evidence>
<evidence type="ECO:0000303" key="6">
    <source>
    </source>
</evidence>
<evidence type="ECO:0000303" key="7">
    <source>
    </source>
</evidence>
<evidence type="ECO:0000305" key="8"/>
<evidence type="ECO:0000312" key="9">
    <source>
        <dbReference type="Araport" id="AT5G24890"/>
    </source>
</evidence>
<evidence type="ECO:0000312" key="10">
    <source>
        <dbReference type="EMBL" id="AED93375.1"/>
    </source>
</evidence>
<comment type="function">
    <text evidence="1 5">Transcription activator which may regulates gene expression through interaction with the histone deacetylase HDA19 (By similarity). Promotes slightly the tolerance to cadmium (Cd) and to oxidizing chemicals (e.g. diamide and tert-butyl hydroperoxide (t-BOOH)) (PubMed:18980652).</text>
</comment>
<comment type="subunit">
    <text evidence="1">Interacts with HDA19; Ser-213 is critical for this interaction.</text>
</comment>
<comment type="subcellular location">
    <subcellularLocation>
        <location evidence="2">Nucleus</location>
    </subcellularLocation>
</comment>
<comment type="domain">
    <text evidence="1">The kinase-inducible domain (KID, 202-229) is required for interaction with HDA19.</text>
</comment>
<sequence length="240" mass="26577">MELMAKPTFSIEVSQYGTTDLPATEKASSSSSSFETTNEEGVEESGLSRIWSGQTADYSSDSSSIGTPGDSEEDEEESENENDDVSSKELGLRGLASMSSLEDSLPSKRGLSNHYKGKSKSFGNLGEIGSVKEVAKQENPLNKRRRLQICNKLARKSFYSWQNPKSMPLLPVNEDEDDDDEDDDEEDLKSGFDENKSSSDEEGVKKVVVRKGSFKNRAYKSRSCFALSDLIEEEDDDDDQ</sequence>
<reference key="1">
    <citation type="journal article" date="2017" name="Plant J.">
        <title>Araport11: a complete reannotation of the Arabidopsis thaliana reference genome.</title>
        <authorList>
            <person name="Cheng C.Y."/>
            <person name="Krishnakumar V."/>
            <person name="Chan A.P."/>
            <person name="Thibaud-Nissen F."/>
            <person name="Schobel S."/>
            <person name="Town C.D."/>
        </authorList>
    </citation>
    <scope>GENOME REANNOTATION</scope>
    <source>
        <strain>cv. Columbia</strain>
    </source>
</reference>
<reference key="2">
    <citation type="submission" date="2002-03" db="EMBL/GenBank/DDBJ databases">
        <title>Full-length cDNA from Arabidopsis thaliana.</title>
        <authorList>
            <person name="Brover V.V."/>
            <person name="Troukhan M.E."/>
            <person name="Alexandrov N.A."/>
            <person name="Lu Y.-P."/>
            <person name="Flavell R.B."/>
            <person name="Feldmann K.A."/>
        </authorList>
    </citation>
    <scope>NUCLEOTIDE SEQUENCE [LARGE SCALE MRNA]</scope>
</reference>
<reference key="3">
    <citation type="journal article" date="2003" name="Science">
        <title>Empirical analysis of transcriptional activity in the Arabidopsis genome.</title>
        <authorList>
            <person name="Yamada K."/>
            <person name="Lim J."/>
            <person name="Dale J.M."/>
            <person name="Chen H."/>
            <person name="Shinn P."/>
            <person name="Palm C.J."/>
            <person name="Southwick A.M."/>
            <person name="Wu H.C."/>
            <person name="Kim C.J."/>
            <person name="Nguyen M."/>
            <person name="Pham P.K."/>
            <person name="Cheuk R.F."/>
            <person name="Karlin-Newmann G."/>
            <person name="Liu S.X."/>
            <person name="Lam B."/>
            <person name="Sakano H."/>
            <person name="Wu T."/>
            <person name="Yu G."/>
            <person name="Miranda M."/>
            <person name="Quach H.L."/>
            <person name="Tripp M."/>
            <person name="Chang C.H."/>
            <person name="Lee J.M."/>
            <person name="Toriumi M.J."/>
            <person name="Chan M.M."/>
            <person name="Tang C.C."/>
            <person name="Onodera C.S."/>
            <person name="Deng J.M."/>
            <person name="Akiyama K."/>
            <person name="Ansari Y."/>
            <person name="Arakawa T."/>
            <person name="Banh J."/>
            <person name="Banno F."/>
            <person name="Bowser L."/>
            <person name="Brooks S.Y."/>
            <person name="Carninci P."/>
            <person name="Chao Q."/>
            <person name="Choy N."/>
            <person name="Enju A."/>
            <person name="Goldsmith A.D."/>
            <person name="Gurjal M."/>
            <person name="Hansen N.F."/>
            <person name="Hayashizaki Y."/>
            <person name="Johnson-Hopson C."/>
            <person name="Hsuan V.W."/>
            <person name="Iida K."/>
            <person name="Karnes M."/>
            <person name="Khan S."/>
            <person name="Koesema E."/>
            <person name="Ishida J."/>
            <person name="Jiang P.X."/>
            <person name="Jones T."/>
            <person name="Kawai J."/>
            <person name="Kamiya A."/>
            <person name="Meyers C."/>
            <person name="Nakajima M."/>
            <person name="Narusaka M."/>
            <person name="Seki M."/>
            <person name="Sakurai T."/>
            <person name="Satou M."/>
            <person name="Tamse R."/>
            <person name="Vaysberg M."/>
            <person name="Wallender E.K."/>
            <person name="Wong C."/>
            <person name="Yamamura Y."/>
            <person name="Yuan S."/>
            <person name="Shinozaki K."/>
            <person name="Davis R.W."/>
            <person name="Theologis A."/>
            <person name="Ecker J.R."/>
        </authorList>
    </citation>
    <scope>NUCLEOTIDE SEQUENCE [LARGE SCALE MRNA]</scope>
    <source>
        <strain>cv. Columbia</strain>
    </source>
</reference>
<reference key="4">
    <citation type="submission" date="2005-07" db="EMBL/GenBank/DDBJ databases">
        <title>Arabidopsis ORF clones.</title>
        <authorList>
            <person name="Cheuk R.F."/>
            <person name="Chen H."/>
            <person name="Kim C.J."/>
            <person name="Shinn P."/>
            <person name="Ecker J.R."/>
        </authorList>
    </citation>
    <scope>NUCLEOTIDE SEQUENCE [LARGE SCALE MRNA]</scope>
    <source>
        <strain>cv. Columbia</strain>
    </source>
</reference>
<reference key="5">
    <citation type="journal article" date="2003" name="Plant J.">
        <title>A novel protein from Brassica napus has a putative KID domain and responds to low temperature.</title>
        <authorList>
            <person name="Gao M.-J."/>
            <person name="Schaefer U.A."/>
            <person name="Parkin I.A.P."/>
            <person name="Hegedus D.D."/>
            <person name="Lydiate D.J."/>
            <person name="Hannoufa A."/>
        </authorList>
    </citation>
    <scope>GENE FAMILY</scope>
</reference>
<reference key="6">
    <citation type="journal article" date="2009" name="Plant J.">
        <title>OXIDATIVE STRESS 3 is a chromatin-associated factor involved in tolerance to heavy metals and oxidative stress.</title>
        <authorList>
            <person name="Blanvillain R."/>
            <person name="Kim J.H."/>
            <person name="Wu S."/>
            <person name="Lima A."/>
            <person name="Ow D.W."/>
        </authorList>
    </citation>
    <scope>FUNCTION</scope>
    <scope>GENE FAMILY</scope>
    <scope>NOMENCLATURE</scope>
    <source>
        <strain>cv. Landsberg erecta</strain>
        <strain>cv. Wassilewskija</strain>
    </source>
</reference>
<reference key="7">
    <citation type="journal article" date="2009" name="Plant Physiol.">
        <title>Large-scale Arabidopsis phosphoproteome profiling reveals novel chloroplast kinase substrates and phosphorylation networks.</title>
        <authorList>
            <person name="Reiland S."/>
            <person name="Messerli G."/>
            <person name="Baerenfaller K."/>
            <person name="Gerrits B."/>
            <person name="Endler A."/>
            <person name="Grossmann J."/>
            <person name="Gruissem W."/>
            <person name="Baginsky S."/>
        </authorList>
    </citation>
    <scope>IDENTIFICATION BY MASS SPECTROMETRY [LARGE SCALE ANALYSIS]</scope>
</reference>
<proteinExistence type="evidence at protein level"/>
<organism>
    <name type="scientific">Arabidopsis thaliana</name>
    <name type="common">Mouse-ear cress</name>
    <dbReference type="NCBI Taxonomy" id="3702"/>
    <lineage>
        <taxon>Eukaryota</taxon>
        <taxon>Viridiplantae</taxon>
        <taxon>Streptophyta</taxon>
        <taxon>Embryophyta</taxon>
        <taxon>Tracheophyta</taxon>
        <taxon>Spermatophyta</taxon>
        <taxon>Magnoliopsida</taxon>
        <taxon>eudicotyledons</taxon>
        <taxon>Gunneridae</taxon>
        <taxon>Pentapetalae</taxon>
        <taxon>rosids</taxon>
        <taxon>malvids</taxon>
        <taxon>Brassicales</taxon>
        <taxon>Brassicaceae</taxon>
        <taxon>Camelineae</taxon>
        <taxon>Arabidopsis</taxon>
    </lineage>
</organism>
<keyword id="KW-0010">Activator</keyword>
<keyword id="KW-0539">Nucleus</keyword>
<keyword id="KW-0597">Phosphoprotein</keyword>
<keyword id="KW-1185">Reference proteome</keyword>
<keyword id="KW-0346">Stress response</keyword>
<keyword id="KW-0804">Transcription</keyword>
<keyword id="KW-0805">Transcription regulation</keyword>
<gene>
    <name evidence="7" type="primary">O3L4</name>
    <name evidence="6" type="synonym">KCP</name>
    <name evidence="9" type="ordered locus">At5g24890</name>
    <name evidence="10" type="ORF">F6A4.100</name>
</gene>
<name>O3L4_ARATH</name>
<protein>
    <recommendedName>
        <fullName evidence="7">Protein OXIDATIVE STRESS 3 LIKE 4</fullName>
        <shortName evidence="7">AtO3L4</shortName>
    </recommendedName>
    <alternativeName>
        <fullName evidence="6">KID-containing protein</fullName>
        <shortName evidence="6">AtKCP</shortName>
    </alternativeName>
</protein>
<dbReference type="EMBL" id="CP002688">
    <property type="protein sequence ID" value="AED93375.1"/>
    <property type="molecule type" value="Genomic_DNA"/>
</dbReference>
<dbReference type="EMBL" id="AY088175">
    <property type="protein sequence ID" value="AAM65718.1"/>
    <property type="molecule type" value="mRNA"/>
</dbReference>
<dbReference type="EMBL" id="BT003969">
    <property type="protein sequence ID" value="AAO42013.1"/>
    <property type="molecule type" value="mRNA"/>
</dbReference>
<dbReference type="EMBL" id="BT020475">
    <property type="protein sequence ID" value="AAW38976.1"/>
    <property type="molecule type" value="mRNA"/>
</dbReference>
<dbReference type="EMBL" id="BT023742">
    <property type="protein sequence ID" value="AAZ23934.1"/>
    <property type="molecule type" value="mRNA"/>
</dbReference>
<dbReference type="RefSeq" id="NP_197871.1">
    <property type="nucleotide sequence ID" value="NM_122398.4"/>
</dbReference>
<dbReference type="FunCoup" id="Q8L9W8">
    <property type="interactions" value="253"/>
</dbReference>
<dbReference type="IntAct" id="Q8L9W8">
    <property type="interactions" value="5"/>
</dbReference>
<dbReference type="STRING" id="3702.Q8L9W8"/>
<dbReference type="iPTMnet" id="Q8L9W8"/>
<dbReference type="PaxDb" id="3702-AT5G24890.1"/>
<dbReference type="ProteomicsDB" id="182990"/>
<dbReference type="EnsemblPlants" id="AT5G24890.1">
    <property type="protein sequence ID" value="AT5G24890.1"/>
    <property type="gene ID" value="AT5G24890"/>
</dbReference>
<dbReference type="GeneID" id="832558"/>
<dbReference type="Gramene" id="AT5G24890.1">
    <property type="protein sequence ID" value="AT5G24890.1"/>
    <property type="gene ID" value="AT5G24890"/>
</dbReference>
<dbReference type="KEGG" id="ath:AT5G24890"/>
<dbReference type="Araport" id="AT5G24890"/>
<dbReference type="TAIR" id="AT5G24890"/>
<dbReference type="eggNOG" id="KOG4210">
    <property type="taxonomic scope" value="Eukaryota"/>
</dbReference>
<dbReference type="HOGENOM" id="CLU_066544_2_0_1"/>
<dbReference type="InParanoid" id="Q8L9W8"/>
<dbReference type="OMA" id="FKSRSCY"/>
<dbReference type="PhylomeDB" id="Q8L9W8"/>
<dbReference type="PRO" id="PR:Q8L9W8"/>
<dbReference type="Proteomes" id="UP000006548">
    <property type="component" value="Chromosome 5"/>
</dbReference>
<dbReference type="ExpressionAtlas" id="Q8L9W8">
    <property type="expression patterns" value="baseline and differential"/>
</dbReference>
<dbReference type="GO" id="GO:0005634">
    <property type="term" value="C:nucleus"/>
    <property type="evidence" value="ECO:0000250"/>
    <property type="project" value="UniProtKB"/>
</dbReference>
<dbReference type="GO" id="GO:0045893">
    <property type="term" value="P:positive regulation of DNA-templated transcription"/>
    <property type="evidence" value="ECO:0000250"/>
    <property type="project" value="UniProtKB"/>
</dbReference>
<dbReference type="GO" id="GO:0046686">
    <property type="term" value="P:response to cadmium ion"/>
    <property type="evidence" value="ECO:0000315"/>
    <property type="project" value="UniProtKB"/>
</dbReference>
<dbReference type="GO" id="GO:0006979">
    <property type="term" value="P:response to oxidative stress"/>
    <property type="evidence" value="ECO:0000315"/>
    <property type="project" value="UniProtKB"/>
</dbReference>
<dbReference type="InterPro" id="IPR051992">
    <property type="entry name" value="OxStress_Response_Reg"/>
</dbReference>
<dbReference type="PANTHER" id="PTHR33172">
    <property type="entry name" value="OS08G0516900 PROTEIN"/>
    <property type="match status" value="1"/>
</dbReference>
<dbReference type="PANTHER" id="PTHR33172:SF93">
    <property type="entry name" value="PROTEIN OXIDATIVE STRESS 3 LIKE 4"/>
    <property type="match status" value="1"/>
</dbReference>
<accession>Q8L9W8</accession>
<accession>Q84WC9</accession>
<feature type="chain" id="PRO_0000455035" description="Protein OXIDATIVE STRESS 3 LIKE 4">
    <location>
        <begin position="1"/>
        <end position="240"/>
    </location>
</feature>
<feature type="region of interest" description="Disordered" evidence="4">
    <location>
        <begin position="1"/>
        <end position="128"/>
    </location>
</feature>
<feature type="region of interest" description="Disordered" evidence="4">
    <location>
        <begin position="163"/>
        <end position="207"/>
    </location>
</feature>
<feature type="region of interest" description="Kinase-inducible domain (KID)" evidence="1">
    <location>
        <begin position="202"/>
        <end position="229"/>
    </location>
</feature>
<feature type="short sequence motif" description="Nuclear localization signal" evidence="3">
    <location>
        <begin position="142"/>
        <end position="150"/>
    </location>
</feature>
<feature type="compositionally biased region" description="Polar residues" evidence="4">
    <location>
        <begin position="51"/>
        <end position="66"/>
    </location>
</feature>
<feature type="compositionally biased region" description="Acidic residues" evidence="4">
    <location>
        <begin position="70"/>
        <end position="84"/>
    </location>
</feature>
<feature type="compositionally biased region" description="Acidic residues" evidence="4">
    <location>
        <begin position="173"/>
        <end position="187"/>
    </location>
</feature>
<feature type="compositionally biased region" description="Basic and acidic residues" evidence="4">
    <location>
        <begin position="188"/>
        <end position="205"/>
    </location>
</feature>
<feature type="site" description="Critical for interaction with HDA19" evidence="1">
    <location>
        <position position="213"/>
    </location>
</feature>
<feature type="modified residue" description="Phosphoserine" evidence="1">
    <location>
        <position position="213"/>
    </location>
</feature>
<feature type="sequence conflict" description="In Ref. 3; AAO42013." evidence="8" ref="3">
    <original>D</original>
    <variation>E</variation>
    <location>
        <position position="182"/>
    </location>
</feature>